<sequence>MASPLRSLMLLLAVLAVAWAGTSRPPPRLLGAPQEADASEEGVQRALDFAVSEYNKGSNDAYHSRAIQVVRARKQLVAGINYYLDVEMGRTTCTKSQTNLTNCPFHDQPHLMRKALCSFQIYSVPWKGTHTLTKSSCKNA</sequence>
<keyword id="KW-0903">Direct protein sequencing</keyword>
<keyword id="KW-1015">Disulfide bond</keyword>
<keyword id="KW-0325">Glycoprotein</keyword>
<keyword id="KW-0646">Protease inhibitor</keyword>
<keyword id="KW-1185">Reference proteome</keyword>
<keyword id="KW-0964">Secreted</keyword>
<keyword id="KW-0732">Signal</keyword>
<keyword id="KW-0789">Thiol protease inhibitor</keyword>
<dbReference type="EMBL" id="BC087591">
    <property type="protein sequence ID" value="AAH87591.1"/>
    <property type="molecule type" value="mRNA"/>
</dbReference>
<dbReference type="EMBL" id="X16957">
    <property type="protein sequence ID" value="CAA34831.1"/>
    <property type="molecule type" value="mRNA"/>
</dbReference>
<dbReference type="PIR" id="S07085">
    <property type="entry name" value="S07085"/>
</dbReference>
<dbReference type="PIR" id="S10587">
    <property type="entry name" value="S10587"/>
</dbReference>
<dbReference type="RefSeq" id="NP_036969.1">
    <property type="nucleotide sequence ID" value="NM_012837.1"/>
</dbReference>
<dbReference type="SMR" id="P14841"/>
<dbReference type="FunCoup" id="P14841">
    <property type="interactions" value="167"/>
</dbReference>
<dbReference type="STRING" id="10116.ENSRNOP00000007175"/>
<dbReference type="MEROPS" id="I25.004"/>
<dbReference type="GlyCosmos" id="P14841">
    <property type="glycosylation" value="1 site, 5 glycans"/>
</dbReference>
<dbReference type="GlyGen" id="P14841">
    <property type="glycosylation" value="1 site, 5 N-linked glycans (1 site)"/>
</dbReference>
<dbReference type="iPTMnet" id="P14841"/>
<dbReference type="PhosphoSitePlus" id="P14841"/>
<dbReference type="SwissPalm" id="P14841"/>
<dbReference type="PaxDb" id="10116-ENSRNOP00000007175"/>
<dbReference type="GeneID" id="25307"/>
<dbReference type="KEGG" id="rno:25307"/>
<dbReference type="UCSC" id="RGD:2432">
    <property type="organism name" value="rat"/>
</dbReference>
<dbReference type="AGR" id="RGD:2432"/>
<dbReference type="CTD" id="1471"/>
<dbReference type="RGD" id="2432">
    <property type="gene designation" value="Cst3"/>
</dbReference>
<dbReference type="VEuPathDB" id="HostDB:ENSRNOG00000005195"/>
<dbReference type="eggNOG" id="ENOG502SC50">
    <property type="taxonomic scope" value="Eukaryota"/>
</dbReference>
<dbReference type="HOGENOM" id="CLU_118168_0_1_1"/>
<dbReference type="InParanoid" id="P14841"/>
<dbReference type="OrthoDB" id="51676at9989"/>
<dbReference type="PhylomeDB" id="P14841"/>
<dbReference type="Reactome" id="R-RNO-381426">
    <property type="pathway name" value="Regulation of Insulin-like Growth Factor (IGF) transport and uptake by Insulin-like Growth Factor Binding Proteins (IGFBPs)"/>
</dbReference>
<dbReference type="Reactome" id="R-RNO-6798695">
    <property type="pathway name" value="Neutrophil degranulation"/>
</dbReference>
<dbReference type="Reactome" id="R-RNO-8957275">
    <property type="pathway name" value="Post-translational protein phosphorylation"/>
</dbReference>
<dbReference type="PRO" id="PR:P14841"/>
<dbReference type="Proteomes" id="UP000002494">
    <property type="component" value="Chromosome 3"/>
</dbReference>
<dbReference type="Bgee" id="ENSRNOG00000005195">
    <property type="expression patterns" value="Expressed in Ammon's horn and 20 other cell types or tissues"/>
</dbReference>
<dbReference type="GO" id="GO:0030424">
    <property type="term" value="C:axon"/>
    <property type="evidence" value="ECO:0000314"/>
    <property type="project" value="RGD"/>
</dbReference>
<dbReference type="GO" id="GO:0005604">
    <property type="term" value="C:basement membrane"/>
    <property type="evidence" value="ECO:0000314"/>
    <property type="project" value="RGD"/>
</dbReference>
<dbReference type="GO" id="GO:0042995">
    <property type="term" value="C:cell projection"/>
    <property type="evidence" value="ECO:0000314"/>
    <property type="project" value="RGD"/>
</dbReference>
<dbReference type="GO" id="GO:0043292">
    <property type="term" value="C:contractile muscle fiber"/>
    <property type="evidence" value="ECO:0000314"/>
    <property type="project" value="RGD"/>
</dbReference>
<dbReference type="GO" id="GO:0005737">
    <property type="term" value="C:cytoplasm"/>
    <property type="evidence" value="ECO:0000318"/>
    <property type="project" value="GO_Central"/>
</dbReference>
<dbReference type="GO" id="GO:0005576">
    <property type="term" value="C:extracellular region"/>
    <property type="evidence" value="ECO:0000266"/>
    <property type="project" value="RGD"/>
</dbReference>
<dbReference type="GO" id="GO:0005615">
    <property type="term" value="C:extracellular space"/>
    <property type="evidence" value="ECO:0000314"/>
    <property type="project" value="RGD"/>
</dbReference>
<dbReference type="GO" id="GO:0005794">
    <property type="term" value="C:Golgi apparatus"/>
    <property type="evidence" value="ECO:0000266"/>
    <property type="project" value="RGD"/>
</dbReference>
<dbReference type="GO" id="GO:0005771">
    <property type="term" value="C:multivesicular body"/>
    <property type="evidence" value="ECO:0000314"/>
    <property type="project" value="RGD"/>
</dbReference>
<dbReference type="GO" id="GO:0043025">
    <property type="term" value="C:neuronal cell body"/>
    <property type="evidence" value="ECO:0000314"/>
    <property type="project" value="RGD"/>
</dbReference>
<dbReference type="GO" id="GO:0031965">
    <property type="term" value="C:nuclear membrane"/>
    <property type="evidence" value="ECO:0000314"/>
    <property type="project" value="RGD"/>
</dbReference>
<dbReference type="GO" id="GO:0048471">
    <property type="term" value="C:perinuclear region of cytoplasm"/>
    <property type="evidence" value="ECO:0000314"/>
    <property type="project" value="RGD"/>
</dbReference>
<dbReference type="GO" id="GO:0005886">
    <property type="term" value="C:plasma membrane"/>
    <property type="evidence" value="ECO:0000266"/>
    <property type="project" value="RGD"/>
</dbReference>
<dbReference type="GO" id="GO:0031982">
    <property type="term" value="C:vesicle"/>
    <property type="evidence" value="ECO:0000314"/>
    <property type="project" value="RGD"/>
</dbReference>
<dbReference type="GO" id="GO:0001540">
    <property type="term" value="F:amyloid-beta binding"/>
    <property type="evidence" value="ECO:0000266"/>
    <property type="project" value="RGD"/>
</dbReference>
<dbReference type="GO" id="GO:0004869">
    <property type="term" value="F:cysteine-type endopeptidase inhibitor activity"/>
    <property type="evidence" value="ECO:0000266"/>
    <property type="project" value="RGD"/>
</dbReference>
<dbReference type="GO" id="GO:0004866">
    <property type="term" value="F:endopeptidase inhibitor activity"/>
    <property type="evidence" value="ECO:0000266"/>
    <property type="project" value="RGD"/>
</dbReference>
<dbReference type="GO" id="GO:0042802">
    <property type="term" value="F:identical protein binding"/>
    <property type="evidence" value="ECO:0000266"/>
    <property type="project" value="RGD"/>
</dbReference>
<dbReference type="GO" id="GO:0030414">
    <property type="term" value="F:peptidase inhibitor activity"/>
    <property type="evidence" value="ECO:0000314"/>
    <property type="project" value="RGD"/>
</dbReference>
<dbReference type="GO" id="GO:0002020">
    <property type="term" value="F:protease binding"/>
    <property type="evidence" value="ECO:0000314"/>
    <property type="project" value="RGD"/>
</dbReference>
<dbReference type="GO" id="GO:0070301">
    <property type="term" value="P:cellular response to hydrogen peroxide"/>
    <property type="evidence" value="ECO:0000270"/>
    <property type="project" value="RGD"/>
</dbReference>
<dbReference type="GO" id="GO:0034599">
    <property type="term" value="P:cellular response to oxidative stress"/>
    <property type="evidence" value="ECO:0000315"/>
    <property type="project" value="RGD"/>
</dbReference>
<dbReference type="GO" id="GO:0006952">
    <property type="term" value="P:defense response"/>
    <property type="evidence" value="ECO:0000266"/>
    <property type="project" value="RGD"/>
</dbReference>
<dbReference type="GO" id="GO:0007566">
    <property type="term" value="P:embryo implantation"/>
    <property type="evidence" value="ECO:0000270"/>
    <property type="project" value="RGD"/>
</dbReference>
<dbReference type="GO" id="GO:0001654">
    <property type="term" value="P:eye development"/>
    <property type="evidence" value="ECO:0000270"/>
    <property type="project" value="RGD"/>
</dbReference>
<dbReference type="GO" id="GO:0008584">
    <property type="term" value="P:male gonad development"/>
    <property type="evidence" value="ECO:0000270"/>
    <property type="project" value="RGD"/>
</dbReference>
<dbReference type="GO" id="GO:0060313">
    <property type="term" value="P:negative regulation of blood vessel remodeling"/>
    <property type="evidence" value="ECO:0000266"/>
    <property type="project" value="RGD"/>
</dbReference>
<dbReference type="GO" id="GO:0010711">
    <property type="term" value="P:negative regulation of collagen catabolic process"/>
    <property type="evidence" value="ECO:0000266"/>
    <property type="project" value="RGD"/>
</dbReference>
<dbReference type="GO" id="GO:0060311">
    <property type="term" value="P:negative regulation of elastin catabolic process"/>
    <property type="evidence" value="ECO:0000266"/>
    <property type="project" value="RGD"/>
</dbReference>
<dbReference type="GO" id="GO:0010716">
    <property type="term" value="P:negative regulation of extracellular matrix disassembly"/>
    <property type="evidence" value="ECO:0000266"/>
    <property type="project" value="RGD"/>
</dbReference>
<dbReference type="GO" id="GO:0045861">
    <property type="term" value="P:negative regulation of proteolysis"/>
    <property type="evidence" value="ECO:0000266"/>
    <property type="project" value="RGD"/>
</dbReference>
<dbReference type="GO" id="GO:0008284">
    <property type="term" value="P:positive regulation of cell population proliferation"/>
    <property type="evidence" value="ECO:0000314"/>
    <property type="project" value="RGD"/>
</dbReference>
<dbReference type="GO" id="GO:0045740">
    <property type="term" value="P:positive regulation of DNA replication"/>
    <property type="evidence" value="ECO:0000314"/>
    <property type="project" value="RGD"/>
</dbReference>
<dbReference type="GO" id="GO:0034103">
    <property type="term" value="P:regulation of tissue remodeling"/>
    <property type="evidence" value="ECO:0000266"/>
    <property type="project" value="RGD"/>
</dbReference>
<dbReference type="GO" id="GO:0048678">
    <property type="term" value="P:response to axon injury"/>
    <property type="evidence" value="ECO:0000270"/>
    <property type="project" value="RGD"/>
</dbReference>
<dbReference type="GO" id="GO:0009743">
    <property type="term" value="P:response to carbohydrate"/>
    <property type="evidence" value="ECO:0000270"/>
    <property type="project" value="RGD"/>
</dbReference>
<dbReference type="GO" id="GO:0032355">
    <property type="term" value="P:response to estradiol"/>
    <property type="evidence" value="ECO:0000270"/>
    <property type="project" value="RGD"/>
</dbReference>
<dbReference type="GO" id="GO:0001666">
    <property type="term" value="P:response to hypoxia"/>
    <property type="evidence" value="ECO:0000270"/>
    <property type="project" value="RGD"/>
</dbReference>
<dbReference type="GO" id="GO:0031667">
    <property type="term" value="P:response to nutrient levels"/>
    <property type="evidence" value="ECO:0000270"/>
    <property type="project" value="RGD"/>
</dbReference>
<dbReference type="GO" id="GO:0009636">
    <property type="term" value="P:response to toxic substance"/>
    <property type="evidence" value="ECO:0000270"/>
    <property type="project" value="RGD"/>
</dbReference>
<dbReference type="GO" id="GO:0009410">
    <property type="term" value="P:response to xenobiotic stimulus"/>
    <property type="evidence" value="ECO:0000270"/>
    <property type="project" value="RGD"/>
</dbReference>
<dbReference type="GO" id="GO:0007431">
    <property type="term" value="P:salivary gland development"/>
    <property type="evidence" value="ECO:0000270"/>
    <property type="project" value="RGD"/>
</dbReference>
<dbReference type="GO" id="GO:0060009">
    <property type="term" value="P:Sertoli cell development"/>
    <property type="evidence" value="ECO:0000270"/>
    <property type="project" value="RGD"/>
</dbReference>
<dbReference type="GO" id="GO:0097435">
    <property type="term" value="P:supramolecular fiber organization"/>
    <property type="evidence" value="ECO:0000266"/>
    <property type="project" value="RGD"/>
</dbReference>
<dbReference type="CDD" id="cd00042">
    <property type="entry name" value="CY"/>
    <property type="match status" value="1"/>
</dbReference>
<dbReference type="FunFam" id="3.10.450.10:FF:000004">
    <property type="entry name" value="Cystatin C"/>
    <property type="match status" value="1"/>
</dbReference>
<dbReference type="Gene3D" id="3.10.450.10">
    <property type="match status" value="1"/>
</dbReference>
<dbReference type="InterPro" id="IPR000010">
    <property type="entry name" value="Cystatin_dom"/>
</dbReference>
<dbReference type="InterPro" id="IPR046350">
    <property type="entry name" value="Cystatin_sf"/>
</dbReference>
<dbReference type="InterPro" id="IPR018073">
    <property type="entry name" value="Prot_inh_cystat_CS"/>
</dbReference>
<dbReference type="PANTHER" id="PTHR46186">
    <property type="entry name" value="CYSTATIN"/>
    <property type="match status" value="1"/>
</dbReference>
<dbReference type="PANTHER" id="PTHR46186:SF6">
    <property type="entry name" value="CYSTATIN-C"/>
    <property type="match status" value="1"/>
</dbReference>
<dbReference type="Pfam" id="PF00031">
    <property type="entry name" value="Cystatin"/>
    <property type="match status" value="1"/>
</dbReference>
<dbReference type="SMART" id="SM00043">
    <property type="entry name" value="CY"/>
    <property type="match status" value="1"/>
</dbReference>
<dbReference type="SUPFAM" id="SSF54403">
    <property type="entry name" value="Cystatin/monellin"/>
    <property type="match status" value="1"/>
</dbReference>
<dbReference type="PROSITE" id="PS00287">
    <property type="entry name" value="CYSTATIN"/>
    <property type="match status" value="1"/>
</dbReference>
<feature type="signal peptide" evidence="2">
    <location>
        <begin position="1"/>
        <end position="20"/>
    </location>
</feature>
<feature type="chain" id="PRO_0000006644" description="Cystatin-C">
    <location>
        <begin position="21"/>
        <end position="140"/>
    </location>
</feature>
<feature type="short sequence motif" description="Secondary area of contact">
    <location>
        <begin position="75"/>
        <end position="79"/>
    </location>
</feature>
<feature type="site" description="Reactive site">
    <location>
        <position position="31"/>
    </location>
</feature>
<feature type="glycosylation site" description="N-linked (GlcNAc...) asparagine" evidence="4">
    <location>
        <position position="99"/>
    </location>
</feature>
<feature type="disulfide bond" evidence="1">
    <location>
        <begin position="93"/>
        <end position="103"/>
    </location>
</feature>
<feature type="disulfide bond" evidence="1">
    <location>
        <begin position="117"/>
        <end position="137"/>
    </location>
</feature>
<feature type="sequence conflict" description="In Ref. 3; AA sequence." evidence="3" ref="3">
    <original>A</original>
    <variation>E</variation>
    <location>
        <position position="38"/>
    </location>
</feature>
<protein>
    <recommendedName>
        <fullName>Cystatin-C</fullName>
    </recommendedName>
    <alternativeName>
        <fullName>Cystatin-3</fullName>
    </alternativeName>
</protein>
<comment type="function">
    <text>As an inhibitor of cysteine proteinases, this protein is thought to serve an important physiological role as a local regulator of this enzyme activity. Known to inhibit cathepsin B, H, and L.</text>
</comment>
<comment type="subcellular location">
    <subcellularLocation>
        <location>Secreted</location>
    </subcellularLocation>
</comment>
<comment type="similarity">
    <text evidence="3">Belongs to the cystatin family.</text>
</comment>
<evidence type="ECO:0000250" key="1"/>
<evidence type="ECO:0000255" key="2"/>
<evidence type="ECO:0000305" key="3"/>
<evidence type="ECO:0007744" key="4">
    <source>
    </source>
</evidence>
<accession>P14841</accession>
<accession>Q5M968</accession>
<proteinExistence type="evidence at protein level"/>
<organism>
    <name type="scientific">Rattus norvegicus</name>
    <name type="common">Rat</name>
    <dbReference type="NCBI Taxonomy" id="10116"/>
    <lineage>
        <taxon>Eukaryota</taxon>
        <taxon>Metazoa</taxon>
        <taxon>Chordata</taxon>
        <taxon>Craniata</taxon>
        <taxon>Vertebrata</taxon>
        <taxon>Euteleostomi</taxon>
        <taxon>Mammalia</taxon>
        <taxon>Eutheria</taxon>
        <taxon>Euarchontoglires</taxon>
        <taxon>Glires</taxon>
        <taxon>Rodentia</taxon>
        <taxon>Myomorpha</taxon>
        <taxon>Muroidea</taxon>
        <taxon>Muridae</taxon>
        <taxon>Murinae</taxon>
        <taxon>Rattus</taxon>
    </lineage>
</organism>
<reference key="1">
    <citation type="journal article" date="2004" name="Genome Res.">
        <title>The status, quality, and expansion of the NIH full-length cDNA project: the Mammalian Gene Collection (MGC).</title>
        <authorList>
            <consortium name="The MGC Project Team"/>
        </authorList>
    </citation>
    <scope>NUCLEOTIDE SEQUENCE [LARGE SCALE MRNA]</scope>
    <source>
        <tissue>Ovary</tissue>
    </source>
</reference>
<reference key="2">
    <citation type="journal article" date="1989" name="Eur. J. Biochem.">
        <title>The cDNA structure and expression analysis of the genes for the cysteine proteinase inhibitor cystatin C and for beta 2-microglobulin in rat brain.</title>
        <authorList>
            <person name="Cole T."/>
            <person name="Dickson P.W."/>
            <person name="Esnard F."/>
            <person name="Averill F."/>
            <person name="Risbridger G."/>
            <person name="Gauthier F."/>
            <person name="Schreiber G."/>
        </authorList>
    </citation>
    <scope>NUCLEOTIDE SEQUENCE [MRNA] OF 14-140</scope>
    <source>
        <strain>Buffalo</strain>
    </source>
</reference>
<reference key="3">
    <citation type="journal article" date="1990" name="Biol. Chem. Hoppe-Seyler">
        <title>Rat cystatin C: the complete amino acid sequence reveals a site for N-glycosylation.</title>
        <authorList>
            <person name="Esnard F."/>
            <person name="Esnard A."/>
            <person name="Faucher D."/>
            <person name="Capony J.-P."/>
            <person name="Derancourt J."/>
            <person name="Brillard M."/>
            <person name="Gauthier F."/>
        </authorList>
    </citation>
    <scope>PROTEIN SEQUENCE OF 21-140</scope>
</reference>
<reference key="4">
    <citation type="journal article" date="1988" name="FEBS Lett.">
        <title>Two rat homologues of human cystatin C.</title>
        <authorList>
            <person name="Esnard A."/>
            <person name="Esnard F."/>
            <person name="Faucher D."/>
            <person name="Gauthier F."/>
        </authorList>
    </citation>
    <scope>PROTEIN SEQUENCE OF 21-62</scope>
</reference>
<reference key="5">
    <citation type="journal article" date="1992" name="FEBS Lett.">
        <title>Production of the cysteine proteinase inhibitor cystatin C by rat Sertoli cells.</title>
        <authorList>
            <person name="Esnard A."/>
            <person name="Esnard F."/>
            <person name="Guillou F."/>
            <person name="Gauthier F."/>
        </authorList>
    </citation>
    <scope>PROTEIN SEQUENCE OF 42-54</scope>
    <source>
        <tissue>Sertoli cell</tissue>
    </source>
</reference>
<reference key="6">
    <citation type="journal article" date="2013" name="J. Proteome Res.">
        <title>Site-specific glycan-peptide analysis for determination of N-glycoproteome heterogeneity.</title>
        <authorList>
            <person name="Parker B.L."/>
            <person name="Thaysen-Andersen M."/>
            <person name="Solis N."/>
            <person name="Scott N.E."/>
            <person name="Larsen M.R."/>
            <person name="Graham M.E."/>
            <person name="Packer N.H."/>
            <person name="Cordwell S.J."/>
        </authorList>
    </citation>
    <scope>GLYCOSYLATION [LARGE SCALE ANALYSIS] AT ASN-99</scope>
    <scope>IDENTIFICATION BY MASS SPECTROMETRY [LARGE SCALE ANALYSIS]</scope>
    <source>
        <tissue>Brain</tissue>
    </source>
</reference>
<name>CYTC_RAT</name>
<gene>
    <name type="primary">Cst3</name>
</gene>